<feature type="initiator methionine" description="Removed" evidence="1">
    <location>
        <position position="1"/>
    </location>
</feature>
<feature type="chain" id="PRO_0000090416" description="Reaction center protein M chain">
    <location>
        <begin position="2"/>
        <end position="256" status="greater than"/>
    </location>
</feature>
<feature type="transmembrane region" description="Helical" evidence="2">
    <location>
        <begin position="52"/>
        <end position="78"/>
    </location>
</feature>
<feature type="transmembrane region" description="Helical" evidence="2">
    <location>
        <begin position="110"/>
        <end position="139"/>
    </location>
</feature>
<feature type="transmembrane region" description="Helical" evidence="2">
    <location>
        <begin position="142"/>
        <end position="167"/>
    </location>
</feature>
<feature type="transmembrane region" description="Helical" evidence="2">
    <location>
        <begin position="197"/>
        <end position="225"/>
    </location>
</feature>
<feature type="binding site" description="axial binding residue" evidence="1">
    <location>
        <position position="181"/>
    </location>
    <ligand>
        <name>(7R,8Z)-bacteriochlorophyll b</name>
        <dbReference type="ChEBI" id="CHEBI:30034"/>
    </ligand>
    <ligandPart>
        <name>Mg</name>
        <dbReference type="ChEBI" id="CHEBI:25107"/>
    </ligandPart>
</feature>
<feature type="binding site" description="axial binding residue" evidence="1">
    <location>
        <position position="201"/>
    </location>
    <ligand>
        <name>(7R,8Z)-bacteriochlorophyll b</name>
        <dbReference type="ChEBI" id="CHEBI:30034"/>
    </ligand>
    <ligandPart>
        <name>Mg</name>
        <dbReference type="ChEBI" id="CHEBI:25107"/>
    </ligandPart>
</feature>
<feature type="binding site" evidence="1">
    <location>
        <position position="218"/>
    </location>
    <ligand>
        <name>Fe cation</name>
        <dbReference type="ChEBI" id="CHEBI:24875"/>
    </ligand>
</feature>
<feature type="binding site" evidence="1">
    <location>
        <position position="233"/>
    </location>
    <ligand>
        <name>Fe cation</name>
        <dbReference type="ChEBI" id="CHEBI:24875"/>
    </ligand>
</feature>
<feature type="binding site" evidence="1">
    <location>
        <position position="251"/>
    </location>
    <ligand>
        <name>a ubiquinone</name>
        <dbReference type="ChEBI" id="CHEBI:16389"/>
    </ligand>
</feature>
<feature type="non-terminal residue">
    <location>
        <position position="256"/>
    </location>
</feature>
<proteinExistence type="inferred from homology"/>
<organism>
    <name type="scientific">Pararhodospirillum photometricum</name>
    <name type="common">Rhodospirillum photometricum</name>
    <dbReference type="NCBI Taxonomy" id="1084"/>
    <lineage>
        <taxon>Bacteria</taxon>
        <taxon>Pseudomonadati</taxon>
        <taxon>Pseudomonadota</taxon>
        <taxon>Alphaproteobacteria</taxon>
        <taxon>Rhodospirillales</taxon>
        <taxon>Rhodospirillaceae</taxon>
        <taxon>Pararhodospirillum</taxon>
    </lineage>
</organism>
<gene>
    <name type="primary">pufM</name>
</gene>
<reference key="1">
    <citation type="journal article" date="1997" name="J. Mol. Evol.">
        <title>Horizontal transfer of genes coding for the photosynthetic reaction centers of purple bacteria.</title>
        <authorList>
            <person name="Nagashima K.V."/>
            <person name="Hiraishi A."/>
            <person name="Shimada K."/>
            <person name="Matsuura K."/>
        </authorList>
    </citation>
    <scope>NUCLEOTIDE SEQUENCE [GENOMIC DNA]</scope>
    <source>
        <strain>D / ATCC 17899 / DSM 180</strain>
    </source>
</reference>
<keyword id="KW-0076">Bacteriochlorophyll</keyword>
<keyword id="KW-0148">Chlorophyll</keyword>
<keyword id="KW-0157">Chromophore</keyword>
<keyword id="KW-0249">Electron transport</keyword>
<keyword id="KW-0408">Iron</keyword>
<keyword id="KW-0460">Magnesium</keyword>
<keyword id="KW-0472">Membrane</keyword>
<keyword id="KW-0479">Metal-binding</keyword>
<keyword id="KW-0602">Photosynthesis</keyword>
<keyword id="KW-0674">Reaction center</keyword>
<keyword id="KW-0812">Transmembrane</keyword>
<keyword id="KW-1133">Transmembrane helix</keyword>
<keyword id="KW-0813">Transport</keyword>
<sequence length="256" mass="28788">MADYQNILTPCRFAPKPHHGVELPRGNWAEKARPIFVWLLGKIGDASSDHPPGVAGTVSAVLFAFAFLIIGANFLASVDWNPIEFIRLLPWLALEPPRPNWAWVLAPMNEGGWWQITGFFLTMSLLVWWWHVYNRARALGLGTHMAWAFASALFLYLTLGFIRPLLLGNWGEAVPFGLFAHLDWTAAFSLRYGNLYYNPFHMLSIAFLYGSAVLFAMHGATILAVSHLGGDREVEQITDRGTAAERAALFWRWTMG</sequence>
<accession>P51751</accession>
<protein>
    <recommendedName>
        <fullName>Reaction center protein M chain</fullName>
    </recommendedName>
    <alternativeName>
        <fullName>Photosynthetic reaction center M subunit</fullName>
    </alternativeName>
</protein>
<comment type="function">
    <text>The reaction center is a membrane-bound complex that mediates the initial photochemical event in the electron transfer process of photosynthesis.</text>
</comment>
<comment type="subunit">
    <text>Reaction center is composed of four bacteriochlorophylls, two bacteriopheophytins, two ubiquinones, one iron, and two highly hydrophobic polypeptide chains (designated L and M).</text>
</comment>
<comment type="subcellular location">
    <subcellularLocation>
        <location evidence="1">Cellular chromatophore membrane</location>
        <topology evidence="1">Multi-pass membrane protein</topology>
    </subcellularLocation>
</comment>
<comment type="similarity">
    <text evidence="3">Belongs to the reaction center PufL/M/PsbA/D family.</text>
</comment>
<dbReference type="EMBL" id="D50681">
    <property type="protein sequence ID" value="BAA09330.1"/>
    <property type="molecule type" value="Genomic_DNA"/>
</dbReference>
<dbReference type="PIR" id="T10821">
    <property type="entry name" value="T10821"/>
</dbReference>
<dbReference type="SMR" id="P51751"/>
<dbReference type="GO" id="GO:0030077">
    <property type="term" value="C:plasma membrane light-harvesting complex"/>
    <property type="evidence" value="ECO:0007669"/>
    <property type="project" value="InterPro"/>
</dbReference>
<dbReference type="GO" id="GO:0042717">
    <property type="term" value="C:plasma membrane-derived chromatophore membrane"/>
    <property type="evidence" value="ECO:0007669"/>
    <property type="project" value="UniProtKB-SubCell"/>
</dbReference>
<dbReference type="GO" id="GO:0042314">
    <property type="term" value="F:bacteriochlorophyll binding"/>
    <property type="evidence" value="ECO:0007669"/>
    <property type="project" value="UniProtKB-KW"/>
</dbReference>
<dbReference type="GO" id="GO:0045156">
    <property type="term" value="F:electron transporter, transferring electrons within the cyclic electron transport pathway of photosynthesis activity"/>
    <property type="evidence" value="ECO:0007669"/>
    <property type="project" value="InterPro"/>
</dbReference>
<dbReference type="GO" id="GO:0046872">
    <property type="term" value="F:metal ion binding"/>
    <property type="evidence" value="ECO:0007669"/>
    <property type="project" value="UniProtKB-KW"/>
</dbReference>
<dbReference type="GO" id="GO:0009772">
    <property type="term" value="P:photosynthetic electron transport in photosystem II"/>
    <property type="evidence" value="ECO:0007669"/>
    <property type="project" value="InterPro"/>
</dbReference>
<dbReference type="Gene3D" id="1.20.85.10">
    <property type="entry name" value="Photosystem II protein D1-like"/>
    <property type="match status" value="2"/>
</dbReference>
<dbReference type="InterPro" id="IPR036854">
    <property type="entry name" value="Photo_II_D1/D2_sf"/>
</dbReference>
<dbReference type="InterPro" id="IPR000484">
    <property type="entry name" value="Photo_RC_L/M"/>
</dbReference>
<dbReference type="InterPro" id="IPR055265">
    <property type="entry name" value="Photo_RC_L/M_CS"/>
</dbReference>
<dbReference type="InterPro" id="IPR005781">
    <property type="entry name" value="Photo_RC_M"/>
</dbReference>
<dbReference type="NCBIfam" id="TIGR01115">
    <property type="entry name" value="pufM"/>
    <property type="match status" value="1"/>
</dbReference>
<dbReference type="Pfam" id="PF00124">
    <property type="entry name" value="Photo_RC"/>
    <property type="match status" value="1"/>
</dbReference>
<dbReference type="PRINTS" id="PR00256">
    <property type="entry name" value="REACTNCENTRE"/>
</dbReference>
<dbReference type="SUPFAM" id="SSF81483">
    <property type="entry name" value="Bacterial photosystem II reaction centre, L and M subunits"/>
    <property type="match status" value="1"/>
</dbReference>
<dbReference type="PROSITE" id="PS00244">
    <property type="entry name" value="REACTION_CENTER"/>
    <property type="match status" value="1"/>
</dbReference>
<evidence type="ECO:0000250" key="1"/>
<evidence type="ECO:0000255" key="2"/>
<evidence type="ECO:0000305" key="3"/>
<name>RCEM_PARPM</name>